<evidence type="ECO:0000255" key="1">
    <source>
        <dbReference type="HAMAP-Rule" id="MF_00071"/>
    </source>
</evidence>
<name>LEPA_LEGPL</name>
<sequence length="610" mass="67744">MLFARRLEQLKDLNRIRNFSIIAHIDHGKSTLADRFIQICGGLTEREMSSQVLDSMDIERERGITIKAQCVSLNYTATDGKTYLLNFIDTPGHVDFSYEVSRSLAACEGAILVVDAAQGVEAQTLAVCYTAIDQSLTVLPVLNKIDLPQAEPERVISEIEDIIGLDAQDAIRVSAKSGLGVNDVLEALVANIPPPKGDVHAPLQALIIDSWFDSYLGVVSLVRIVNGSIRKGDKMRVMSTGRAYEVDQVGIFTPKRTKLDALYAGEVGYVVAGIKEIQGAPVGDTLTLDRNPADKVLPGFQRVKPQVYAGLFPVSSDDFEAFREALAKLSLNDASLFYEPESSEALGFGFRCGFLGMLHMEIIQERLEREYNLDLISTAPTVVYQIVTQKGETLLIDNPSHLPPTPQIKEMYEPIVRANILVPQDYLGPIITLCVERRGVQVSMTYSGRHVSVVYDIPMSEVVSDFFDRLKSVSRGYASLDYNFQRFQIADLVKMDILINSERVDALAVIVHRDSAHSRGKLIAEKMQQLIPRQMFDVAIQAAIGSHIIARQTVKALRKNVTAKCYGGDVTRKRKLLEKQKAGKKRMKQVGHVEIPQEAFMAVFQTDKKK</sequence>
<proteinExistence type="inferred from homology"/>
<comment type="function">
    <text evidence="1">Required for accurate and efficient protein synthesis under certain stress conditions. May act as a fidelity factor of the translation reaction, by catalyzing a one-codon backward translocation of tRNAs on improperly translocated ribosomes. Back-translocation proceeds from a post-translocation (POST) complex to a pre-translocation (PRE) complex, thus giving elongation factor G a second chance to translocate the tRNAs correctly. Binds to ribosomes in a GTP-dependent manner.</text>
</comment>
<comment type="catalytic activity">
    <reaction evidence="1">
        <text>GTP + H2O = GDP + phosphate + H(+)</text>
        <dbReference type="Rhea" id="RHEA:19669"/>
        <dbReference type="ChEBI" id="CHEBI:15377"/>
        <dbReference type="ChEBI" id="CHEBI:15378"/>
        <dbReference type="ChEBI" id="CHEBI:37565"/>
        <dbReference type="ChEBI" id="CHEBI:43474"/>
        <dbReference type="ChEBI" id="CHEBI:58189"/>
        <dbReference type="EC" id="3.6.5.n1"/>
    </reaction>
</comment>
<comment type="subcellular location">
    <subcellularLocation>
        <location evidence="1">Cell inner membrane</location>
        <topology evidence="1">Peripheral membrane protein</topology>
        <orientation evidence="1">Cytoplasmic side</orientation>
    </subcellularLocation>
</comment>
<comment type="similarity">
    <text evidence="1">Belongs to the TRAFAC class translation factor GTPase superfamily. Classic translation factor GTPase family. LepA subfamily.</text>
</comment>
<keyword id="KW-0997">Cell inner membrane</keyword>
<keyword id="KW-1003">Cell membrane</keyword>
<keyword id="KW-0342">GTP-binding</keyword>
<keyword id="KW-0378">Hydrolase</keyword>
<keyword id="KW-0472">Membrane</keyword>
<keyword id="KW-0547">Nucleotide-binding</keyword>
<keyword id="KW-0648">Protein biosynthesis</keyword>
<protein>
    <recommendedName>
        <fullName evidence="1">Elongation factor 4</fullName>
        <shortName evidence="1">EF-4</shortName>
        <ecNumber evidence="1">3.6.5.n1</ecNumber>
    </recommendedName>
    <alternativeName>
        <fullName evidence="1">Ribosomal back-translocase LepA</fullName>
    </alternativeName>
</protein>
<dbReference type="EC" id="3.6.5.n1" evidence="1"/>
<dbReference type="EMBL" id="CR628337">
    <property type="protein sequence ID" value="CAH16073.1"/>
    <property type="molecule type" value="Genomic_DNA"/>
</dbReference>
<dbReference type="RefSeq" id="WP_011215835.1">
    <property type="nucleotide sequence ID" value="NC_006369.1"/>
</dbReference>
<dbReference type="SMR" id="Q5WVI1"/>
<dbReference type="KEGG" id="lpf:lpl1834"/>
<dbReference type="LegioList" id="lpl1834"/>
<dbReference type="HOGENOM" id="CLU_009995_3_3_6"/>
<dbReference type="Proteomes" id="UP000002517">
    <property type="component" value="Chromosome"/>
</dbReference>
<dbReference type="GO" id="GO:0005886">
    <property type="term" value="C:plasma membrane"/>
    <property type="evidence" value="ECO:0007669"/>
    <property type="project" value="UniProtKB-SubCell"/>
</dbReference>
<dbReference type="GO" id="GO:0005525">
    <property type="term" value="F:GTP binding"/>
    <property type="evidence" value="ECO:0007669"/>
    <property type="project" value="UniProtKB-UniRule"/>
</dbReference>
<dbReference type="GO" id="GO:0003924">
    <property type="term" value="F:GTPase activity"/>
    <property type="evidence" value="ECO:0007669"/>
    <property type="project" value="UniProtKB-UniRule"/>
</dbReference>
<dbReference type="GO" id="GO:0097216">
    <property type="term" value="F:guanosine tetraphosphate binding"/>
    <property type="evidence" value="ECO:0007669"/>
    <property type="project" value="UniProtKB-ARBA"/>
</dbReference>
<dbReference type="GO" id="GO:0043022">
    <property type="term" value="F:ribosome binding"/>
    <property type="evidence" value="ECO:0007669"/>
    <property type="project" value="UniProtKB-UniRule"/>
</dbReference>
<dbReference type="GO" id="GO:0003746">
    <property type="term" value="F:translation elongation factor activity"/>
    <property type="evidence" value="ECO:0007669"/>
    <property type="project" value="UniProtKB-UniRule"/>
</dbReference>
<dbReference type="GO" id="GO:0045727">
    <property type="term" value="P:positive regulation of translation"/>
    <property type="evidence" value="ECO:0007669"/>
    <property type="project" value="UniProtKB-UniRule"/>
</dbReference>
<dbReference type="CDD" id="cd03699">
    <property type="entry name" value="EF4_II"/>
    <property type="match status" value="1"/>
</dbReference>
<dbReference type="CDD" id="cd16260">
    <property type="entry name" value="EF4_III"/>
    <property type="match status" value="1"/>
</dbReference>
<dbReference type="CDD" id="cd01890">
    <property type="entry name" value="LepA"/>
    <property type="match status" value="1"/>
</dbReference>
<dbReference type="CDD" id="cd03709">
    <property type="entry name" value="lepA_C"/>
    <property type="match status" value="1"/>
</dbReference>
<dbReference type="FunFam" id="3.40.50.300:FF:000078">
    <property type="entry name" value="Elongation factor 4"/>
    <property type="match status" value="1"/>
</dbReference>
<dbReference type="FunFam" id="2.40.30.10:FF:000015">
    <property type="entry name" value="Translation factor GUF1, mitochondrial"/>
    <property type="match status" value="1"/>
</dbReference>
<dbReference type="FunFam" id="3.30.70.240:FF:000007">
    <property type="entry name" value="Translation factor GUF1, mitochondrial"/>
    <property type="match status" value="1"/>
</dbReference>
<dbReference type="FunFam" id="3.30.70.2570:FF:000001">
    <property type="entry name" value="Translation factor GUF1, mitochondrial"/>
    <property type="match status" value="1"/>
</dbReference>
<dbReference type="FunFam" id="3.30.70.870:FF:000004">
    <property type="entry name" value="Translation factor GUF1, mitochondrial"/>
    <property type="match status" value="1"/>
</dbReference>
<dbReference type="Gene3D" id="3.30.70.240">
    <property type="match status" value="1"/>
</dbReference>
<dbReference type="Gene3D" id="3.30.70.2570">
    <property type="entry name" value="Elongation factor 4, C-terminal domain"/>
    <property type="match status" value="1"/>
</dbReference>
<dbReference type="Gene3D" id="3.30.70.870">
    <property type="entry name" value="Elongation Factor G (Translational Gtpase), domain 3"/>
    <property type="match status" value="1"/>
</dbReference>
<dbReference type="Gene3D" id="3.40.50.300">
    <property type="entry name" value="P-loop containing nucleotide triphosphate hydrolases"/>
    <property type="match status" value="1"/>
</dbReference>
<dbReference type="Gene3D" id="2.40.30.10">
    <property type="entry name" value="Translation factors"/>
    <property type="match status" value="1"/>
</dbReference>
<dbReference type="HAMAP" id="MF_00071">
    <property type="entry name" value="LepA"/>
    <property type="match status" value="1"/>
</dbReference>
<dbReference type="InterPro" id="IPR006297">
    <property type="entry name" value="EF-4"/>
</dbReference>
<dbReference type="InterPro" id="IPR035647">
    <property type="entry name" value="EFG_III/V"/>
</dbReference>
<dbReference type="InterPro" id="IPR000640">
    <property type="entry name" value="EFG_V-like"/>
</dbReference>
<dbReference type="InterPro" id="IPR004161">
    <property type="entry name" value="EFTu-like_2"/>
</dbReference>
<dbReference type="InterPro" id="IPR031157">
    <property type="entry name" value="G_TR_CS"/>
</dbReference>
<dbReference type="InterPro" id="IPR038363">
    <property type="entry name" value="LepA_C_sf"/>
</dbReference>
<dbReference type="InterPro" id="IPR013842">
    <property type="entry name" value="LepA_CTD"/>
</dbReference>
<dbReference type="InterPro" id="IPR035654">
    <property type="entry name" value="LepA_IV"/>
</dbReference>
<dbReference type="InterPro" id="IPR027417">
    <property type="entry name" value="P-loop_NTPase"/>
</dbReference>
<dbReference type="InterPro" id="IPR005225">
    <property type="entry name" value="Small_GTP-bd"/>
</dbReference>
<dbReference type="InterPro" id="IPR000795">
    <property type="entry name" value="T_Tr_GTP-bd_dom"/>
</dbReference>
<dbReference type="NCBIfam" id="TIGR01393">
    <property type="entry name" value="lepA"/>
    <property type="match status" value="1"/>
</dbReference>
<dbReference type="NCBIfam" id="TIGR00231">
    <property type="entry name" value="small_GTP"/>
    <property type="match status" value="1"/>
</dbReference>
<dbReference type="PANTHER" id="PTHR43512:SF4">
    <property type="entry name" value="TRANSLATION FACTOR GUF1 HOMOLOG, CHLOROPLASTIC"/>
    <property type="match status" value="1"/>
</dbReference>
<dbReference type="PANTHER" id="PTHR43512">
    <property type="entry name" value="TRANSLATION FACTOR GUF1-RELATED"/>
    <property type="match status" value="1"/>
</dbReference>
<dbReference type="Pfam" id="PF00679">
    <property type="entry name" value="EFG_C"/>
    <property type="match status" value="1"/>
</dbReference>
<dbReference type="Pfam" id="PF00009">
    <property type="entry name" value="GTP_EFTU"/>
    <property type="match status" value="1"/>
</dbReference>
<dbReference type="Pfam" id="PF03144">
    <property type="entry name" value="GTP_EFTU_D2"/>
    <property type="match status" value="1"/>
</dbReference>
<dbReference type="Pfam" id="PF06421">
    <property type="entry name" value="LepA_C"/>
    <property type="match status" value="1"/>
</dbReference>
<dbReference type="PRINTS" id="PR00315">
    <property type="entry name" value="ELONGATNFCT"/>
</dbReference>
<dbReference type="SMART" id="SM00838">
    <property type="entry name" value="EFG_C"/>
    <property type="match status" value="1"/>
</dbReference>
<dbReference type="SUPFAM" id="SSF54980">
    <property type="entry name" value="EF-G C-terminal domain-like"/>
    <property type="match status" value="2"/>
</dbReference>
<dbReference type="SUPFAM" id="SSF52540">
    <property type="entry name" value="P-loop containing nucleoside triphosphate hydrolases"/>
    <property type="match status" value="1"/>
</dbReference>
<dbReference type="PROSITE" id="PS00301">
    <property type="entry name" value="G_TR_1"/>
    <property type="match status" value="1"/>
</dbReference>
<dbReference type="PROSITE" id="PS51722">
    <property type="entry name" value="G_TR_2"/>
    <property type="match status" value="1"/>
</dbReference>
<organism>
    <name type="scientific">Legionella pneumophila (strain Lens)</name>
    <dbReference type="NCBI Taxonomy" id="297245"/>
    <lineage>
        <taxon>Bacteria</taxon>
        <taxon>Pseudomonadati</taxon>
        <taxon>Pseudomonadota</taxon>
        <taxon>Gammaproteobacteria</taxon>
        <taxon>Legionellales</taxon>
        <taxon>Legionellaceae</taxon>
        <taxon>Legionella</taxon>
    </lineage>
</organism>
<feature type="chain" id="PRO_0000224769" description="Elongation factor 4">
    <location>
        <begin position="1"/>
        <end position="610"/>
    </location>
</feature>
<feature type="domain" description="tr-type G">
    <location>
        <begin position="14"/>
        <end position="196"/>
    </location>
</feature>
<feature type="binding site" evidence="1">
    <location>
        <begin position="26"/>
        <end position="31"/>
    </location>
    <ligand>
        <name>GTP</name>
        <dbReference type="ChEBI" id="CHEBI:37565"/>
    </ligand>
</feature>
<feature type="binding site" evidence="1">
    <location>
        <begin position="143"/>
        <end position="146"/>
    </location>
    <ligand>
        <name>GTP</name>
        <dbReference type="ChEBI" id="CHEBI:37565"/>
    </ligand>
</feature>
<gene>
    <name evidence="1" type="primary">lepA</name>
    <name type="ordered locus">lpl1834</name>
</gene>
<reference key="1">
    <citation type="journal article" date="2004" name="Nat. Genet.">
        <title>Evidence in the Legionella pneumophila genome for exploitation of host cell functions and high genome plasticity.</title>
        <authorList>
            <person name="Cazalet C."/>
            <person name="Rusniok C."/>
            <person name="Brueggemann H."/>
            <person name="Zidane N."/>
            <person name="Magnier A."/>
            <person name="Ma L."/>
            <person name="Tichit M."/>
            <person name="Jarraud S."/>
            <person name="Bouchier C."/>
            <person name="Vandenesch F."/>
            <person name="Kunst F."/>
            <person name="Etienne J."/>
            <person name="Glaser P."/>
            <person name="Buchrieser C."/>
        </authorList>
    </citation>
    <scope>NUCLEOTIDE SEQUENCE [LARGE SCALE GENOMIC DNA]</scope>
    <source>
        <strain>Lens</strain>
    </source>
</reference>
<accession>Q5WVI1</accession>